<geneLocation type="mitochondrion"/>
<proteinExistence type="predicted"/>
<reference key="1">
    <citation type="journal article" date="1997" name="Nat. Genet.">
        <title>The mitochondrial genome of Arabidopsis thaliana contains 57 genes in 366,924 nucleotides.</title>
        <authorList>
            <person name="Unseld M."/>
            <person name="Marienfeld J.R."/>
            <person name="Brandt P."/>
            <person name="Brennicke A."/>
        </authorList>
    </citation>
    <scope>NUCLEOTIDE SEQUENCE [LARGE SCALE GENOMIC DNA]</scope>
    <source>
        <strain>cv. C24</strain>
    </source>
</reference>
<reference key="2">
    <citation type="journal article" date="2018" name="Plant Cell">
        <title>Correction of persistent errors in Arabidopsis reference mitochondrial genomes.</title>
        <authorList>
            <person name="Sloan D.B."/>
            <person name="Wu Z."/>
            <person name="Sharbrough J."/>
        </authorList>
    </citation>
    <scope>NUCLEOTIDE SEQUENCE [LARGE SCALE GENOMIC DNA]</scope>
    <source>
        <strain>cv. Columbia</strain>
    </source>
</reference>
<reference key="3">
    <citation type="journal article" date="1999" name="Nature">
        <title>Sequence and analysis of chromosome 2 of the plant Arabidopsis thaliana.</title>
        <authorList>
            <person name="Lin X."/>
            <person name="Kaul S."/>
            <person name="Rounsley S.D."/>
            <person name="Shea T.P."/>
            <person name="Benito M.-I."/>
            <person name="Town C.D."/>
            <person name="Fujii C.Y."/>
            <person name="Mason T.M."/>
            <person name="Bowman C.L."/>
            <person name="Barnstead M.E."/>
            <person name="Feldblyum T.V."/>
            <person name="Buell C.R."/>
            <person name="Ketchum K.A."/>
            <person name="Lee J.J."/>
            <person name="Ronning C.M."/>
            <person name="Koo H.L."/>
            <person name="Moffat K.S."/>
            <person name="Cronin L.A."/>
            <person name="Shen M."/>
            <person name="Pai G."/>
            <person name="Van Aken S."/>
            <person name="Umayam L."/>
            <person name="Tallon L.J."/>
            <person name="Gill J.E."/>
            <person name="Adams M.D."/>
            <person name="Carrera A.J."/>
            <person name="Creasy T.H."/>
            <person name="Goodman H.M."/>
            <person name="Somerville C.R."/>
            <person name="Copenhaver G.P."/>
            <person name="Preuss D."/>
            <person name="Nierman W.C."/>
            <person name="White O."/>
            <person name="Eisen J.A."/>
            <person name="Salzberg S.L."/>
            <person name="Fraser C.M."/>
            <person name="Venter J.C."/>
        </authorList>
    </citation>
    <scope>NUCLEOTIDE SEQUENCE [LARGE SCALE GENOMIC DNA]</scope>
    <source>
        <strain>cv. Columbia</strain>
    </source>
</reference>
<sequence length="106" mass="12291">MVVTAYPKSSAGMGVTVLPEYLKQSSYEAYSRPYSAFFLSGCTKQERSPLLARRLVDAWLSFHSILMINEEVSDWEQLSDHYTRRSLFKTIAFRNLQREEEYRPGG</sequence>
<feature type="chain" id="PRO_0000196771" description="Uncharacterized mitochondrial protein AtMg00450">
    <location>
        <begin position="1"/>
        <end position="106"/>
    </location>
</feature>
<organism>
    <name type="scientific">Arabidopsis thaliana</name>
    <name type="common">Mouse-ear cress</name>
    <dbReference type="NCBI Taxonomy" id="3702"/>
    <lineage>
        <taxon>Eukaryota</taxon>
        <taxon>Viridiplantae</taxon>
        <taxon>Streptophyta</taxon>
        <taxon>Embryophyta</taxon>
        <taxon>Tracheophyta</taxon>
        <taxon>Spermatophyta</taxon>
        <taxon>Magnoliopsida</taxon>
        <taxon>eudicotyledons</taxon>
        <taxon>Gunneridae</taxon>
        <taxon>Pentapetalae</taxon>
        <taxon>rosids</taxon>
        <taxon>malvids</taxon>
        <taxon>Brassicales</taxon>
        <taxon>Brassicaceae</taxon>
        <taxon>Camelineae</taxon>
        <taxon>Arabidopsis</taxon>
    </lineage>
</organism>
<protein>
    <recommendedName>
        <fullName>Uncharacterized mitochondrial protein AtMg00450</fullName>
    </recommendedName>
    <alternativeName>
        <fullName>ORF106b</fullName>
    </alternativeName>
</protein>
<gene>
    <name type="ordered locus">AtMg00450</name>
</gene>
<accession>P93301</accession>
<evidence type="ECO:0000305" key="1"/>
<dbReference type="EMBL" id="Y08501">
    <property type="protein sequence ID" value="CAA69730.1"/>
    <property type="molecule type" value="Genomic_DNA"/>
</dbReference>
<dbReference type="EMBL" id="BK010421">
    <property type="status" value="NOT_ANNOTATED_CDS"/>
    <property type="molecule type" value="Genomic_DNA"/>
</dbReference>
<dbReference type="EMBL" id="AC007729">
    <property type="status" value="NOT_ANNOTATED_CDS"/>
    <property type="molecule type" value="Genomic_DNA"/>
</dbReference>
<dbReference type="RefSeq" id="NP_085506.1">
    <property type="nucleotide sequence ID" value="NC_001284.2"/>
</dbReference>
<dbReference type="BioGRID" id="30873">
    <property type="interactions" value="1"/>
</dbReference>
<dbReference type="STRING" id="3702.P93301"/>
<dbReference type="PaxDb" id="3702-ATMG00450.1"/>
<dbReference type="EnsemblPlants" id="ATMG00450.1">
    <property type="protein sequence ID" value="ATMG00450.1"/>
    <property type="gene ID" value="ATMG00450"/>
</dbReference>
<dbReference type="Gramene" id="ATMG00450.1">
    <property type="protein sequence ID" value="ATMG00450.1"/>
    <property type="gene ID" value="ATMG00450"/>
</dbReference>
<dbReference type="Araport" id="ATMG00450"/>
<dbReference type="TAIR" id="ATMG00450">
    <property type="gene designation" value="ORF106B"/>
</dbReference>
<dbReference type="HOGENOM" id="CLU_2226867_0_0_1"/>
<dbReference type="InParanoid" id="P93301"/>
<dbReference type="PRO" id="PR:P93301"/>
<dbReference type="Proteomes" id="UP000006548">
    <property type="component" value="Mitochondrion MT"/>
</dbReference>
<dbReference type="GO" id="GO:0005739">
    <property type="term" value="C:mitochondrion"/>
    <property type="evidence" value="ECO:0007669"/>
    <property type="project" value="UniProtKB-SubCell"/>
</dbReference>
<name>M450_ARATH</name>
<comment type="subcellular location">
    <subcellularLocation>
        <location evidence="1">Mitochondrion</location>
    </subcellularLocation>
</comment>
<comment type="miscellaneous">
    <text>A stretch of 270 kb of the mitochondrial genome is duplicated within the centromere of chromosome 2 resulting in the duplication of the gene. The expression of the duplicated gene is not demonstrated.</text>
</comment>
<keyword id="KW-0496">Mitochondrion</keyword>
<keyword id="KW-1185">Reference proteome</keyword>